<proteinExistence type="evidence at protein level"/>
<feature type="initiator methionine" description="Removed" evidence="18">
    <location>
        <position position="1"/>
    </location>
</feature>
<feature type="chain" id="PRO_0000094565" description="55 kDa erythrocyte membrane protein">
    <location>
        <begin position="2"/>
        <end position="466"/>
    </location>
</feature>
<feature type="domain" description="PDZ" evidence="4">
    <location>
        <begin position="71"/>
        <end position="152"/>
    </location>
</feature>
<feature type="domain" description="SH3" evidence="5">
    <location>
        <begin position="158"/>
        <end position="228"/>
    </location>
</feature>
<feature type="domain" description="Guanylate kinase-like" evidence="3">
    <location>
        <begin position="282"/>
        <end position="451"/>
    </location>
</feature>
<feature type="region of interest" description="Interaction with PALS1" evidence="7">
    <location>
        <begin position="268"/>
        <end position="466"/>
    </location>
</feature>
<feature type="modified residue" description="N-acetylthreonine" evidence="18">
    <location>
        <position position="2"/>
    </location>
</feature>
<feature type="modified residue" description="Phosphoserine" evidence="17">
    <location>
        <position position="13"/>
    </location>
</feature>
<feature type="modified residue" description="Phosphoserine" evidence="17">
    <location>
        <position position="19"/>
    </location>
</feature>
<feature type="modified residue" description="Phosphothreonine" evidence="15">
    <location>
        <position position="49"/>
    </location>
</feature>
<feature type="modified residue" description="Phosphoserine" evidence="2">
    <location>
        <position position="52"/>
    </location>
</feature>
<feature type="modified residue" description="Phosphoserine" evidence="15 17">
    <location>
        <position position="57"/>
    </location>
</feature>
<feature type="modified residue" description="Phosphoserine" evidence="16 17">
    <location>
        <position position="110"/>
    </location>
</feature>
<feature type="modified residue" description="Phosphoserine" evidence="15 17">
    <location>
        <position position="243"/>
    </location>
</feature>
<feature type="splice variant" id="VSP_042675" description="In isoform 2." evidence="11">
    <original>MTLKASEGESGGSMHTALSDLYLEHLLQKRSRPE</original>
    <variation>MESW</variation>
    <location>
        <begin position="1"/>
        <end position="34"/>
    </location>
</feature>
<feature type="splice variant" id="VSP_044634" description="In isoform 3." evidence="12">
    <location>
        <begin position="161"/>
        <end position="180"/>
    </location>
</feature>
<feature type="sequence variant" id="VAR_011914" description="In dbSNP:rs14092.">
    <original>E</original>
    <variation>Q</variation>
    <location>
        <position position="448"/>
    </location>
</feature>
<feature type="sequence conflict" description="In Ref. 5; AAV35469." evidence="13" ref="5">
    <original>Q</original>
    <variation>R</variation>
    <location>
        <position position="204"/>
    </location>
</feature>
<feature type="strand" evidence="19">
    <location>
        <begin position="70"/>
        <end position="76"/>
    </location>
</feature>
<feature type="strand" evidence="19">
    <location>
        <begin position="78"/>
        <end position="80"/>
    </location>
</feature>
<feature type="strand" evidence="19">
    <location>
        <begin position="83"/>
        <end position="88"/>
    </location>
</feature>
<feature type="strand" evidence="19">
    <location>
        <begin position="94"/>
        <end position="99"/>
    </location>
</feature>
<feature type="strand" evidence="19">
    <location>
        <begin position="101"/>
        <end position="103"/>
    </location>
</feature>
<feature type="helix" evidence="19">
    <location>
        <begin position="104"/>
        <end position="108"/>
    </location>
</feature>
<feature type="strand" evidence="19">
    <location>
        <begin position="116"/>
        <end position="120"/>
    </location>
</feature>
<feature type="turn" evidence="20">
    <location>
        <begin position="125"/>
        <end position="127"/>
    </location>
</feature>
<feature type="helix" evidence="19">
    <location>
        <begin position="131"/>
        <end position="139"/>
    </location>
</feature>
<feature type="strand" evidence="19">
    <location>
        <begin position="142"/>
        <end position="149"/>
    </location>
</feature>
<feature type="strand" evidence="21">
    <location>
        <begin position="284"/>
        <end position="288"/>
    </location>
</feature>
<feature type="helix" evidence="21">
    <location>
        <begin position="295"/>
        <end position="305"/>
    </location>
</feature>
<feature type="turn" evidence="21">
    <location>
        <begin position="307"/>
        <end position="309"/>
    </location>
</feature>
<feature type="helix" evidence="21">
    <location>
        <begin position="336"/>
        <end position="344"/>
    </location>
</feature>
<feature type="strand" evidence="21">
    <location>
        <begin position="348"/>
        <end position="354"/>
    </location>
</feature>
<feature type="strand" evidence="21">
    <location>
        <begin position="357"/>
        <end position="362"/>
    </location>
</feature>
<feature type="helix" evidence="21">
    <location>
        <begin position="363"/>
        <end position="371"/>
    </location>
</feature>
<feature type="strand" evidence="21">
    <location>
        <begin position="375"/>
        <end position="379"/>
    </location>
</feature>
<feature type="helix" evidence="21">
    <location>
        <begin position="382"/>
        <end position="384"/>
    </location>
</feature>
<feature type="helix" evidence="21">
    <location>
        <begin position="385"/>
        <end position="388"/>
    </location>
</feature>
<feature type="turn" evidence="21">
    <location>
        <begin position="391"/>
        <end position="393"/>
    </location>
</feature>
<feature type="strand" evidence="21">
    <location>
        <begin position="395"/>
        <end position="402"/>
    </location>
</feature>
<feature type="strand" evidence="21">
    <location>
        <begin position="405"/>
        <end position="407"/>
    </location>
</feature>
<feature type="helix" evidence="21">
    <location>
        <begin position="410"/>
        <end position="426"/>
    </location>
</feature>
<feature type="helix" evidence="21">
    <location>
        <begin position="427"/>
        <end position="429"/>
    </location>
</feature>
<feature type="strand" evidence="21">
    <location>
        <begin position="431"/>
        <end position="437"/>
    </location>
</feature>
<feature type="helix" evidence="21">
    <location>
        <begin position="439"/>
        <end position="452"/>
    </location>
</feature>
<organism>
    <name type="scientific">Homo sapiens</name>
    <name type="common">Human</name>
    <dbReference type="NCBI Taxonomy" id="9606"/>
    <lineage>
        <taxon>Eukaryota</taxon>
        <taxon>Metazoa</taxon>
        <taxon>Chordata</taxon>
        <taxon>Craniata</taxon>
        <taxon>Vertebrata</taxon>
        <taxon>Euteleostomi</taxon>
        <taxon>Mammalia</taxon>
        <taxon>Eutheria</taxon>
        <taxon>Euarchontoglires</taxon>
        <taxon>Primates</taxon>
        <taxon>Haplorrhini</taxon>
        <taxon>Catarrhini</taxon>
        <taxon>Hominidae</taxon>
        <taxon>Homo</taxon>
    </lineage>
</organism>
<comment type="function">
    <text evidence="1">Essential regulator of neutrophil polarity. Regulates neutrophil polarization by regulating AKT1 phosphorylation through a mechanism that is independent of PIK3CG activity (By similarity).</text>
</comment>
<comment type="subunit">
    <text evidence="7 8">Heterodimer with PALS1. Interacts with DLG5 and NF2. Interacts (via guanylate kinase-like domain) with WHRN (via third PDZ domain).</text>
</comment>
<comment type="interaction">
    <interactant intactId="EBI-711788">
        <id>Q00013</id>
    </interactant>
    <interactant intactId="EBI-4319622">
        <id>O15439</id>
        <label>ABCC4</label>
    </interactant>
    <organismsDiffer>false</organismsDiffer>
    <experiments>10</experiments>
</comment>
<comment type="interaction">
    <interactant intactId="EBI-711788">
        <id>Q00013</id>
    </interactant>
    <interactant intactId="EBI-13074986">
        <id>Q8TDN7</id>
        <label>ACER1</label>
    </interactant>
    <organismsDiffer>false</organismsDiffer>
    <experiments>3</experiments>
</comment>
<comment type="interaction">
    <interactant intactId="EBI-711788">
        <id>Q00013</id>
    </interactant>
    <interactant intactId="EBI-13319881">
        <id>Q5QJU3-2</id>
        <label>ACER2</label>
    </interactant>
    <organismsDiffer>false</organismsDiffer>
    <experiments>3</experiments>
</comment>
<comment type="interaction">
    <interactant intactId="EBI-711788">
        <id>Q00013</id>
    </interactant>
    <interactant intactId="EBI-2803601">
        <id>Q9NRZ7</id>
        <label>AGPAT3</label>
    </interactant>
    <organismsDiffer>false</organismsDiffer>
    <experiments>3</experiments>
</comment>
<comment type="interaction">
    <interactant intactId="EBI-711788">
        <id>Q00013</id>
    </interactant>
    <interactant intactId="EBI-297683">
        <id>Q96CW1</id>
        <label>AP2M1</label>
    </interactant>
    <organismsDiffer>false</organismsDiffer>
    <experiments>5</experiments>
</comment>
<comment type="interaction">
    <interactant intactId="EBI-711788">
        <id>Q00013</id>
    </interactant>
    <interactant intactId="EBI-2606935">
        <id>Q96BI3</id>
        <label>APH1A</label>
    </interactant>
    <organismsDiffer>false</organismsDiffer>
    <experiments>3</experiments>
</comment>
<comment type="interaction">
    <interactant intactId="EBI-711788">
        <id>Q00013</id>
    </interactant>
    <interactant intactId="EBI-12830308">
        <id>Q6UW56-2</id>
        <label>ATRAID</label>
    </interactant>
    <organismsDiffer>false</organismsDiffer>
    <experiments>3</experiments>
</comment>
<comment type="interaction">
    <interactant intactId="EBI-711788">
        <id>Q00013</id>
    </interactant>
    <interactant intactId="EBI-7962814">
        <id>Q9GZP9</id>
        <label>DERL2</label>
    </interactant>
    <organismsDiffer>false</organismsDiffer>
    <experiments>3</experiments>
</comment>
<comment type="interaction">
    <interactant intactId="EBI-711788">
        <id>Q00013</id>
    </interactant>
    <interactant intactId="EBI-12831978">
        <id>Q6ZPD8</id>
        <label>DGAT2L6</label>
    </interactant>
    <organismsDiffer>false</organismsDiffer>
    <experiments>3</experiments>
</comment>
<comment type="interaction">
    <interactant intactId="EBI-711788">
        <id>Q00013</id>
    </interactant>
    <interactant intactId="EBI-748356">
        <id>Q9ULA0</id>
        <label>DNPEP</label>
    </interactant>
    <organismsDiffer>false</organismsDiffer>
    <experiments>6</experiments>
</comment>
<comment type="interaction">
    <interactant intactId="EBI-711788">
        <id>Q00013</id>
    </interactant>
    <interactant intactId="EBI-348399">
        <id>P22607</id>
        <label>FGFR3</label>
    </interactant>
    <organismsDiffer>false</organismsDiffer>
    <experiments>3</experiments>
</comment>
<comment type="interaction">
    <interactant intactId="EBI-711788">
        <id>Q00013</id>
    </interactant>
    <interactant intactId="EBI-11519926">
        <id>Q6PI77</id>
        <label>GPRASP3</label>
    </interactant>
    <organismsDiffer>false</organismsDiffer>
    <experiments>3</experiments>
</comment>
<comment type="interaction">
    <interactant intactId="EBI-711788">
        <id>Q00013</id>
    </interactant>
    <interactant intactId="EBI-351506">
        <id>P06396</id>
        <label>GSN</label>
    </interactant>
    <organismsDiffer>false</organismsDiffer>
    <experiments>3</experiments>
</comment>
<comment type="interaction">
    <interactant intactId="EBI-711788">
        <id>Q00013</id>
    </interactant>
    <interactant intactId="EBI-6509505">
        <id>Q0VD86</id>
        <label>INCA1</label>
    </interactant>
    <organismsDiffer>false</organismsDiffer>
    <experiments>3</experiments>
</comment>
<comment type="interaction">
    <interactant intactId="EBI-711788">
        <id>Q00013</id>
    </interactant>
    <interactant intactId="EBI-740929">
        <id>Q53G59</id>
        <label>KLHL12</label>
    </interactant>
    <organismsDiffer>false</organismsDiffer>
    <experiments>6</experiments>
</comment>
<comment type="interaction">
    <interactant intactId="EBI-711788">
        <id>Q00013</id>
    </interactant>
    <interactant intactId="EBI-16439278">
        <id>Q6FHY5</id>
        <label>MEOX2</label>
    </interactant>
    <organismsDiffer>false</organismsDiffer>
    <experiments>3</experiments>
</comment>
<comment type="interaction">
    <interactant intactId="EBI-711788">
        <id>Q00013</id>
    </interactant>
    <interactant intactId="EBI-748974">
        <id>Q96CV9</id>
        <label>OPTN</label>
    </interactant>
    <organismsDiffer>false</organismsDiffer>
    <experiments>2</experiments>
</comment>
<comment type="interaction">
    <interactant intactId="EBI-711788">
        <id>Q00013</id>
    </interactant>
    <interactant intactId="EBI-12847818">
        <id>Q8TEZ7</id>
        <label>PAQR8</label>
    </interactant>
    <organismsDiffer>false</organismsDiffer>
    <experiments>3</experiments>
</comment>
<comment type="interaction">
    <interactant intactId="EBI-711788">
        <id>Q00013</id>
    </interactant>
    <interactant intactId="EBI-10044038">
        <id>Q96LW4</id>
        <label>PRIMPOL</label>
    </interactant>
    <organismsDiffer>false</organismsDiffer>
    <experiments>3</experiments>
</comment>
<comment type="interaction">
    <interactant intactId="EBI-711788">
        <id>Q00013</id>
    </interactant>
    <interactant intactId="EBI-1052363">
        <id>Q9NS64</id>
        <label>RPRM</label>
    </interactant>
    <organismsDiffer>false</organismsDiffer>
    <experiments>3</experiments>
</comment>
<comment type="interaction">
    <interactant intactId="EBI-711788">
        <id>Q00013</id>
    </interactant>
    <interactant intactId="EBI-720094">
        <id>Q96K37</id>
        <label>SLC35E1</label>
    </interactant>
    <organismsDiffer>false</organismsDiffer>
    <experiments>3</experiments>
</comment>
<comment type="interaction">
    <interactant intactId="EBI-711788">
        <id>Q00013</id>
    </interactant>
    <interactant intactId="EBI-16433464">
        <id>R4GMP8</id>
        <label>SRSF10</label>
    </interactant>
    <organismsDiffer>false</organismsDiffer>
    <experiments>3</experiments>
</comment>
<comment type="interaction">
    <interactant intactId="EBI-711788">
        <id>Q00013</id>
    </interactant>
    <interactant intactId="EBI-11321949">
        <id>O43761</id>
        <label>SYNGR3</label>
    </interactant>
    <organismsDiffer>false</organismsDiffer>
    <experiments>3</experiments>
</comment>
<comment type="interaction">
    <interactant intactId="EBI-711788">
        <id>Q00013</id>
    </interactant>
    <interactant intactId="EBI-11528917">
        <id>Q8WW34-2</id>
        <label>TMEM239</label>
    </interactant>
    <organismsDiffer>false</organismsDiffer>
    <experiments>3</experiments>
</comment>
<comment type="interaction">
    <interactant intactId="EBI-711788">
        <id>Q00013</id>
    </interactant>
    <interactant intactId="EBI-357355">
        <id>Q9UBK9</id>
        <label>UXT</label>
    </interactant>
    <organismsDiffer>false</organismsDiffer>
    <experiments>3</experiments>
</comment>
<comment type="interaction">
    <interactant intactId="EBI-711788">
        <id>Q00013</id>
    </interactant>
    <interactant intactId="EBI-947476">
        <id>Q9UID6</id>
        <label>ZNF639</label>
    </interactant>
    <organismsDiffer>false</organismsDiffer>
    <experiments>3</experiments>
</comment>
<comment type="subcellular location">
    <subcellularLocation>
        <location evidence="8">Cell membrane</location>
        <topology evidence="14">Lipid-anchor</topology>
    </subcellularLocation>
    <subcellularLocation>
        <location evidence="2">Cell projection</location>
        <location evidence="2">Stereocilium</location>
    </subcellularLocation>
    <text evidence="2 8">Colocalizes with WHRN at stereocilium tip during hair cell development (By similarity). Colocalizes with PALS1 in the retina, at the outer limiting membrane (OLM) (By similarity). Colocalizes with WHRN in the retina, at the outer limiting membrane (OLM), outer plexifirm layer (OPL), basal bodies and at the connecting cilium (CC) (By similarity). Colocalizes with NF2 in non-myelin-forming Schwann cells (PubMed:19144871).</text>
</comment>
<comment type="alternative products">
    <event type="alternative splicing"/>
    <isoform>
        <id>Q00013-1</id>
        <name>1</name>
        <sequence type="displayed"/>
    </isoform>
    <isoform>
        <id>Q00013-2</id>
        <name>2</name>
        <sequence type="described" ref="VSP_042675"/>
    </isoform>
    <isoform>
        <id>Q00013-3</id>
        <name>3</name>
        <sequence type="described" ref="VSP_044634"/>
    </isoform>
</comment>
<comment type="tissue specificity">
    <text evidence="7">Ubiquitous.</text>
</comment>
<comment type="PTM">
    <text evidence="6">Palmitoylated.</text>
</comment>
<comment type="similarity">
    <text evidence="13">Belongs to the MAGUK family.</text>
</comment>
<comment type="caution">
    <text evidence="9 10">Thought to be palmitoylated by ZDHHC17 (PubMed:22496366). This work was later retracted due to image manipulation (PubMed:29475958).</text>
</comment>
<gene>
    <name type="primary">MPP1</name>
    <name type="synonym">DXS552E</name>
    <name type="synonym">EMP55</name>
</gene>
<name>EM55_HUMAN</name>
<protein>
    <recommendedName>
        <fullName>55 kDa erythrocyte membrane protein</fullName>
        <shortName>p55</shortName>
    </recommendedName>
    <alternativeName>
        <fullName>Membrane protein, palmitoylated 1</fullName>
    </alternativeName>
</protein>
<dbReference type="EMBL" id="M64925">
    <property type="protein sequence ID" value="AAA60059.1"/>
    <property type="molecule type" value="mRNA"/>
</dbReference>
<dbReference type="EMBL" id="M87059">
    <property type="protein sequence ID" value="AAA60060.1"/>
    <property type="molecule type" value="Genomic_DNA"/>
</dbReference>
<dbReference type="EMBL" id="U39611">
    <property type="protein sequence ID" value="AAD14835.1"/>
    <property type="molecule type" value="Genomic_DNA"/>
</dbReference>
<dbReference type="EMBL" id="AY423731">
    <property type="protein sequence ID" value="AAS00494.1"/>
    <property type="molecule type" value="mRNA"/>
</dbReference>
<dbReference type="EMBL" id="AK290246">
    <property type="protein sequence ID" value="BAF82935.1"/>
    <property type="molecule type" value="mRNA"/>
</dbReference>
<dbReference type="EMBL" id="AK303111">
    <property type="protein sequence ID" value="BAG64217.1"/>
    <property type="molecule type" value="mRNA"/>
</dbReference>
<dbReference type="EMBL" id="AK312296">
    <property type="protein sequence ID" value="BAG35223.1"/>
    <property type="molecule type" value="mRNA"/>
</dbReference>
<dbReference type="EMBL" id="AK315957">
    <property type="protein sequence ID" value="BAH14328.1"/>
    <property type="molecule type" value="mRNA"/>
</dbReference>
<dbReference type="EMBL" id="AY634686">
    <property type="protein sequence ID" value="AAV35469.1"/>
    <property type="molecule type" value="mRNA"/>
</dbReference>
<dbReference type="EMBL" id="AC109993">
    <property type="status" value="NOT_ANNOTATED_CDS"/>
    <property type="molecule type" value="Genomic_DNA"/>
</dbReference>
<dbReference type="EMBL" id="CH471172">
    <property type="protein sequence ID" value="EAW72655.1"/>
    <property type="molecule type" value="Genomic_DNA"/>
</dbReference>
<dbReference type="EMBL" id="CH471172">
    <property type="protein sequence ID" value="EAW72656.1"/>
    <property type="molecule type" value="Genomic_DNA"/>
</dbReference>
<dbReference type="EMBL" id="CH471172">
    <property type="protein sequence ID" value="EAW72660.1"/>
    <property type="molecule type" value="Genomic_DNA"/>
</dbReference>
<dbReference type="EMBL" id="BC002392">
    <property type="protein sequence ID" value="AAH02392.1"/>
    <property type="molecule type" value="mRNA"/>
</dbReference>
<dbReference type="CCDS" id="CCDS14762.1">
    <molecule id="Q00013-1"/>
</dbReference>
<dbReference type="CCDS" id="CCDS55544.1">
    <molecule id="Q00013-2"/>
</dbReference>
<dbReference type="CCDS" id="CCDS55545.1">
    <molecule id="Q00013-3"/>
</dbReference>
<dbReference type="PIR" id="A39599">
    <property type="entry name" value="A39599"/>
</dbReference>
<dbReference type="RefSeq" id="NP_001159932.1">
    <property type="nucleotide sequence ID" value="NM_001166460.1"/>
</dbReference>
<dbReference type="RefSeq" id="NP_001159933.1">
    <molecule id="Q00013-3"/>
    <property type="nucleotide sequence ID" value="NM_001166461.2"/>
</dbReference>
<dbReference type="RefSeq" id="NP_001159934.1">
    <molecule id="Q00013-2"/>
    <property type="nucleotide sequence ID" value="NM_001166462.2"/>
</dbReference>
<dbReference type="RefSeq" id="NP_002427.1">
    <molecule id="Q00013-1"/>
    <property type="nucleotide sequence ID" value="NM_002436.4"/>
</dbReference>
<dbReference type="PDB" id="2EJY">
    <property type="method" value="NMR"/>
    <property type="chains" value="A=69-153"/>
</dbReference>
<dbReference type="PDB" id="2EV8">
    <property type="method" value="NMR"/>
    <property type="chains" value="A=69-153"/>
</dbReference>
<dbReference type="PDB" id="3NEY">
    <property type="method" value="X-ray"/>
    <property type="resolution" value="2.26 A"/>
    <property type="chains" value="A/B/C/D/E/F=282-460"/>
</dbReference>
<dbReference type="PDBsum" id="2EJY"/>
<dbReference type="PDBsum" id="2EV8"/>
<dbReference type="PDBsum" id="3NEY"/>
<dbReference type="SMR" id="Q00013"/>
<dbReference type="BioGRID" id="110494">
    <property type="interactions" value="119"/>
</dbReference>
<dbReference type="ComplexPortal" id="CPX-658">
    <property type="entry name" value="Actin junctional complex"/>
</dbReference>
<dbReference type="CORUM" id="Q00013"/>
<dbReference type="ELM" id="Q00013"/>
<dbReference type="FunCoup" id="Q00013">
    <property type="interactions" value="171"/>
</dbReference>
<dbReference type="IntAct" id="Q00013">
    <property type="interactions" value="88"/>
</dbReference>
<dbReference type="MINT" id="Q00013"/>
<dbReference type="STRING" id="9606.ENSP00000358547"/>
<dbReference type="GlyGen" id="Q00013">
    <property type="glycosylation" value="2 sites, 1 O-linked glycan (2 sites)"/>
</dbReference>
<dbReference type="iPTMnet" id="Q00013"/>
<dbReference type="MetOSite" id="Q00013"/>
<dbReference type="PhosphoSitePlus" id="Q00013"/>
<dbReference type="SwissPalm" id="Q00013"/>
<dbReference type="BioMuta" id="MPP1"/>
<dbReference type="DMDM" id="1346575"/>
<dbReference type="jPOST" id="Q00013"/>
<dbReference type="MassIVE" id="Q00013"/>
<dbReference type="PaxDb" id="9606-ENSP00000358547"/>
<dbReference type="PeptideAtlas" id="Q00013"/>
<dbReference type="ProteomicsDB" id="33755"/>
<dbReference type="ProteomicsDB" id="57837">
    <molecule id="Q00013-1"/>
</dbReference>
<dbReference type="ProteomicsDB" id="57838">
    <molecule id="Q00013-2"/>
</dbReference>
<dbReference type="Pumba" id="Q00013"/>
<dbReference type="Antibodypedia" id="419">
    <property type="antibodies" value="352 antibodies from 33 providers"/>
</dbReference>
<dbReference type="DNASU" id="4354"/>
<dbReference type="Ensembl" id="ENST00000369534.8">
    <molecule id="Q00013-1"/>
    <property type="protein sequence ID" value="ENSP00000358547.3"/>
    <property type="gene ID" value="ENSG00000130830.15"/>
</dbReference>
<dbReference type="Ensembl" id="ENST00000393531.5">
    <molecule id="Q00013-3"/>
    <property type="protein sequence ID" value="ENSP00000377165.1"/>
    <property type="gene ID" value="ENSG00000130830.15"/>
</dbReference>
<dbReference type="Ensembl" id="ENST00000413259.7">
    <molecule id="Q00013-2"/>
    <property type="protein sequence ID" value="ENSP00000400155.3"/>
    <property type="gene ID" value="ENSG00000130830.15"/>
</dbReference>
<dbReference type="GeneID" id="4354"/>
<dbReference type="KEGG" id="hsa:4354"/>
<dbReference type="MANE-Select" id="ENST00000369534.8">
    <property type="protein sequence ID" value="ENSP00000358547.3"/>
    <property type="RefSeq nucleotide sequence ID" value="NM_002436.4"/>
    <property type="RefSeq protein sequence ID" value="NP_002427.1"/>
</dbReference>
<dbReference type="UCSC" id="uc004fmp.3">
    <molecule id="Q00013-1"/>
    <property type="organism name" value="human"/>
</dbReference>
<dbReference type="AGR" id="HGNC:7219"/>
<dbReference type="CTD" id="4354"/>
<dbReference type="DisGeNET" id="4354"/>
<dbReference type="GeneCards" id="MPP1"/>
<dbReference type="HGNC" id="HGNC:7219">
    <property type="gene designation" value="MPP1"/>
</dbReference>
<dbReference type="HPA" id="ENSG00000130830">
    <property type="expression patterns" value="Tissue enhanced (bone)"/>
</dbReference>
<dbReference type="MIM" id="305360">
    <property type="type" value="gene"/>
</dbReference>
<dbReference type="neXtProt" id="NX_Q00013"/>
<dbReference type="OpenTargets" id="ENSG00000130830"/>
<dbReference type="PharmGKB" id="PA30924"/>
<dbReference type="VEuPathDB" id="HostDB:ENSG00000130830"/>
<dbReference type="eggNOG" id="KOG0609">
    <property type="taxonomic scope" value="Eukaryota"/>
</dbReference>
<dbReference type="GeneTree" id="ENSGT00940000158744"/>
<dbReference type="HOGENOM" id="CLU_001715_5_1_1"/>
<dbReference type="InParanoid" id="Q00013"/>
<dbReference type="OMA" id="FERACNS"/>
<dbReference type="OrthoDB" id="65789at2759"/>
<dbReference type="PAN-GO" id="Q00013">
    <property type="GO annotations" value="3 GO annotations based on evolutionary models"/>
</dbReference>
<dbReference type="PhylomeDB" id="Q00013"/>
<dbReference type="TreeFam" id="TF314263"/>
<dbReference type="PathwayCommons" id="Q00013"/>
<dbReference type="Reactome" id="R-HSA-9662361">
    <property type="pathway name" value="Sensory processing of sound by outer hair cells of the cochlea"/>
</dbReference>
<dbReference type="SignaLink" id="Q00013"/>
<dbReference type="BioGRID-ORCS" id="4354">
    <property type="hits" value="11 hits in 775 CRISPR screens"/>
</dbReference>
<dbReference type="CD-CODE" id="FB4E32DD">
    <property type="entry name" value="Presynaptic clusters and postsynaptic densities"/>
</dbReference>
<dbReference type="ChiTaRS" id="MPP1">
    <property type="organism name" value="human"/>
</dbReference>
<dbReference type="EvolutionaryTrace" id="Q00013"/>
<dbReference type="GeneWiki" id="MPP1"/>
<dbReference type="GenomeRNAi" id="4354"/>
<dbReference type="Pharos" id="Q00013">
    <property type="development level" value="Tbio"/>
</dbReference>
<dbReference type="PRO" id="PR:Q00013"/>
<dbReference type="Proteomes" id="UP000005640">
    <property type="component" value="Chromosome X"/>
</dbReference>
<dbReference type="RNAct" id="Q00013">
    <property type="molecule type" value="protein"/>
</dbReference>
<dbReference type="Bgee" id="ENSG00000130830">
    <property type="expression patterns" value="Expressed in monocyte and 205 other cell types or tissues"/>
</dbReference>
<dbReference type="ExpressionAtlas" id="Q00013">
    <property type="expression patterns" value="baseline and differential"/>
</dbReference>
<dbReference type="GO" id="GO:0005911">
    <property type="term" value="C:cell-cell junction"/>
    <property type="evidence" value="ECO:0000318"/>
    <property type="project" value="GO_Central"/>
</dbReference>
<dbReference type="GO" id="GO:0034451">
    <property type="term" value="C:centriolar satellite"/>
    <property type="evidence" value="ECO:0000314"/>
    <property type="project" value="HPA"/>
</dbReference>
<dbReference type="GO" id="GO:0030863">
    <property type="term" value="C:cortical cytoskeleton"/>
    <property type="evidence" value="ECO:0007669"/>
    <property type="project" value="Ensembl"/>
</dbReference>
<dbReference type="GO" id="GO:0016020">
    <property type="term" value="C:membrane"/>
    <property type="evidence" value="ECO:0007005"/>
    <property type="project" value="UniProtKB"/>
</dbReference>
<dbReference type="GO" id="GO:0005886">
    <property type="term" value="C:plasma membrane"/>
    <property type="evidence" value="ECO:0000314"/>
    <property type="project" value="HPA"/>
</dbReference>
<dbReference type="GO" id="GO:0032420">
    <property type="term" value="C:stereocilium"/>
    <property type="evidence" value="ECO:0007669"/>
    <property type="project" value="UniProtKB-SubCell"/>
</dbReference>
<dbReference type="GO" id="GO:0004385">
    <property type="term" value="F:guanylate kinase activity"/>
    <property type="evidence" value="ECO:0000304"/>
    <property type="project" value="ProtInc"/>
</dbReference>
<dbReference type="GO" id="GO:0005102">
    <property type="term" value="F:signaling receptor binding"/>
    <property type="evidence" value="ECO:0000318"/>
    <property type="project" value="GO_Central"/>
</dbReference>
<dbReference type="GO" id="GO:0090022">
    <property type="term" value="P:regulation of neutrophil chemotaxis"/>
    <property type="evidence" value="ECO:0000250"/>
    <property type="project" value="UniProtKB"/>
</dbReference>
<dbReference type="GO" id="GO:0007165">
    <property type="term" value="P:signal transduction"/>
    <property type="evidence" value="ECO:0000304"/>
    <property type="project" value="ProtInc"/>
</dbReference>
<dbReference type="CDD" id="cd00071">
    <property type="entry name" value="GMPK"/>
    <property type="match status" value="1"/>
</dbReference>
<dbReference type="CDD" id="cd10830">
    <property type="entry name" value="PDZ_MPP1-like"/>
    <property type="match status" value="1"/>
</dbReference>
<dbReference type="CDD" id="cd12080">
    <property type="entry name" value="SH3_MPP1"/>
    <property type="match status" value="1"/>
</dbReference>
<dbReference type="FunFam" id="2.30.30.40:FF:000135">
    <property type="entry name" value="55 kDa erythrocyte membrane protein"/>
    <property type="match status" value="1"/>
</dbReference>
<dbReference type="FunFam" id="3.30.63.10:FF:000002">
    <property type="entry name" value="Guanylate kinase 1"/>
    <property type="match status" value="1"/>
</dbReference>
<dbReference type="FunFam" id="3.40.50.300:FF:000146">
    <property type="entry name" value="MAGUK p55 subfamily member 6 isoform X1"/>
    <property type="match status" value="1"/>
</dbReference>
<dbReference type="FunFam" id="2.30.42.10:FF:000016">
    <property type="entry name" value="peripheral plasma membrane protein CASK isoform X2"/>
    <property type="match status" value="1"/>
</dbReference>
<dbReference type="Gene3D" id="2.30.42.10">
    <property type="match status" value="1"/>
</dbReference>
<dbReference type="Gene3D" id="3.40.50.300">
    <property type="entry name" value="P-loop containing nucleotide triphosphate hydrolases"/>
    <property type="match status" value="1"/>
</dbReference>
<dbReference type="Gene3D" id="2.30.30.40">
    <property type="entry name" value="SH3 Domains"/>
    <property type="match status" value="1"/>
</dbReference>
<dbReference type="InterPro" id="IPR008145">
    <property type="entry name" value="GK/Ca_channel_bsu"/>
</dbReference>
<dbReference type="InterPro" id="IPR008144">
    <property type="entry name" value="Guanylate_kin-like_dom"/>
</dbReference>
<dbReference type="InterPro" id="IPR020590">
    <property type="entry name" value="Guanylate_kinase_CS"/>
</dbReference>
<dbReference type="InterPro" id="IPR050716">
    <property type="entry name" value="MAGUK"/>
</dbReference>
<dbReference type="InterPro" id="IPR035475">
    <property type="entry name" value="MPP1_SH3"/>
</dbReference>
<dbReference type="InterPro" id="IPR027417">
    <property type="entry name" value="P-loop_NTPase"/>
</dbReference>
<dbReference type="InterPro" id="IPR001478">
    <property type="entry name" value="PDZ"/>
</dbReference>
<dbReference type="InterPro" id="IPR036034">
    <property type="entry name" value="PDZ_sf"/>
</dbReference>
<dbReference type="InterPro" id="IPR036028">
    <property type="entry name" value="SH3-like_dom_sf"/>
</dbReference>
<dbReference type="InterPro" id="IPR001452">
    <property type="entry name" value="SH3_domain"/>
</dbReference>
<dbReference type="PANTHER" id="PTHR23122">
    <property type="entry name" value="MEMBRANE-ASSOCIATED GUANYLATE KINASE MAGUK"/>
    <property type="match status" value="1"/>
</dbReference>
<dbReference type="Pfam" id="PF00625">
    <property type="entry name" value="Guanylate_kin"/>
    <property type="match status" value="1"/>
</dbReference>
<dbReference type="Pfam" id="PF00595">
    <property type="entry name" value="PDZ"/>
    <property type="match status" value="1"/>
</dbReference>
<dbReference type="Pfam" id="PF00018">
    <property type="entry name" value="SH3_1"/>
    <property type="match status" value="1"/>
</dbReference>
<dbReference type="SMART" id="SM00072">
    <property type="entry name" value="GuKc"/>
    <property type="match status" value="1"/>
</dbReference>
<dbReference type="SMART" id="SM00228">
    <property type="entry name" value="PDZ"/>
    <property type="match status" value="1"/>
</dbReference>
<dbReference type="SMART" id="SM00326">
    <property type="entry name" value="SH3"/>
    <property type="match status" value="1"/>
</dbReference>
<dbReference type="SUPFAM" id="SSF52540">
    <property type="entry name" value="P-loop containing nucleoside triphosphate hydrolases"/>
    <property type="match status" value="1"/>
</dbReference>
<dbReference type="SUPFAM" id="SSF50156">
    <property type="entry name" value="PDZ domain-like"/>
    <property type="match status" value="1"/>
</dbReference>
<dbReference type="SUPFAM" id="SSF50044">
    <property type="entry name" value="SH3-domain"/>
    <property type="match status" value="1"/>
</dbReference>
<dbReference type="PROSITE" id="PS00856">
    <property type="entry name" value="GUANYLATE_KINASE_1"/>
    <property type="match status" value="1"/>
</dbReference>
<dbReference type="PROSITE" id="PS50052">
    <property type="entry name" value="GUANYLATE_KINASE_2"/>
    <property type="match status" value="1"/>
</dbReference>
<dbReference type="PROSITE" id="PS50106">
    <property type="entry name" value="PDZ"/>
    <property type="match status" value="1"/>
</dbReference>
<dbReference type="PROSITE" id="PS50002">
    <property type="entry name" value="SH3"/>
    <property type="match status" value="1"/>
</dbReference>
<sequence length="466" mass="52296">MTLKASEGESGGSMHTALSDLYLEHLLQKRSRPEAVSHPLNTVTEDMYTNGSPAPGSPAQVKGQEVRKVRLIQFEKVTEEPMGITLKLNEKQSCTVARILHGGMIHRQGSLHVGDEILEINGTNVTNHSVDQLQKAMKETKGMISLKVIPNQQSRLPALQMFMRAQFDYDPKKDNLIPCKEAGLKFATGDIIQIINKDDSNWWQGRVEGSSKESAGLIPSPELQEWRVASMAQSAPSEAPSCSPFGKKKKYKDKYLAKHSSIFDQLDVVSYEEVVRLPAFKRKTLVLIGASGVGRSHIKNALLSQNPEKFVYPVPYTTRPPRKSEEDGKEYHFISTEEMTRNISANEFLEFGSYQGNMFGTKFETVHQIHKQNKIAILDIEPQTLKIVRTAELSPFIVFIAPTDQGTQTEALQQLQKDSEAIRSQYAHYFDLSLVNNGVDETLKKLQEAFDQACSSPQWVPVSWVY</sequence>
<accession>Q00013</accession>
<accession>B4DZV5</accession>
<accession>G3XAI1</accession>
<accession>Q2TSB6</accession>
<accession>Q5J7V5</accession>
<reference key="1">
    <citation type="journal article" date="1991" name="Proc. Natl. Acad. Sci. U.S.A.">
        <title>Molecular identification of a major palmitoylated erythrocyte membrane protein containing the src homology 3 motif.</title>
        <authorList>
            <person name="Ruff P."/>
            <person name="Speicher D.W."/>
            <person name="Husain-Chishti A."/>
        </authorList>
    </citation>
    <scope>NUCLEOTIDE SEQUENCE [MRNA] (ISOFORM 1)</scope>
    <scope>PARTIAL PROTEIN SEQUENCE</scope>
    <scope>PALMITOYLATION</scope>
    <source>
        <tissue>Reticulocyte</tissue>
    </source>
</reference>
<reference key="2">
    <citation type="journal article" date="1992" name="Hum. Mol. Genet.">
        <title>The gene encoding the palmitoylated erythrocyte membrane protein, p55, originates at the CpG island 3' to the factor VIII gene.</title>
        <authorList>
            <person name="Metzenberg A.B."/>
            <person name="Gitschier J."/>
        </authorList>
    </citation>
    <scope>NUCLEOTIDE SEQUENCE [GENOMIC DNA]</scope>
</reference>
<reference key="3">
    <citation type="submission" date="2003-09" db="EMBL/GenBank/DDBJ databases">
        <title>Identification of a human migration-related gene.</title>
        <authorList>
            <person name="Kim J.W."/>
        </authorList>
    </citation>
    <scope>NUCLEOTIDE SEQUENCE [LARGE SCALE MRNA] (ISOFORM 1)</scope>
    <source>
        <tissue>Lung cancer</tissue>
    </source>
</reference>
<reference key="4">
    <citation type="journal article" date="2004" name="Nat. Genet.">
        <title>Complete sequencing and characterization of 21,243 full-length human cDNAs.</title>
        <authorList>
            <person name="Ota T."/>
            <person name="Suzuki Y."/>
            <person name="Nishikawa T."/>
            <person name="Otsuki T."/>
            <person name="Sugiyama T."/>
            <person name="Irie R."/>
            <person name="Wakamatsu A."/>
            <person name="Hayashi K."/>
            <person name="Sato H."/>
            <person name="Nagai K."/>
            <person name="Kimura K."/>
            <person name="Makita H."/>
            <person name="Sekine M."/>
            <person name="Obayashi M."/>
            <person name="Nishi T."/>
            <person name="Shibahara T."/>
            <person name="Tanaka T."/>
            <person name="Ishii S."/>
            <person name="Yamamoto J."/>
            <person name="Saito K."/>
            <person name="Kawai Y."/>
            <person name="Isono Y."/>
            <person name="Nakamura Y."/>
            <person name="Nagahari K."/>
            <person name="Murakami K."/>
            <person name="Yasuda T."/>
            <person name="Iwayanagi T."/>
            <person name="Wagatsuma M."/>
            <person name="Shiratori A."/>
            <person name="Sudo H."/>
            <person name="Hosoiri T."/>
            <person name="Kaku Y."/>
            <person name="Kodaira H."/>
            <person name="Kondo H."/>
            <person name="Sugawara M."/>
            <person name="Takahashi M."/>
            <person name="Kanda K."/>
            <person name="Yokoi T."/>
            <person name="Furuya T."/>
            <person name="Kikkawa E."/>
            <person name="Omura Y."/>
            <person name="Abe K."/>
            <person name="Kamihara K."/>
            <person name="Katsuta N."/>
            <person name="Sato K."/>
            <person name="Tanikawa M."/>
            <person name="Yamazaki M."/>
            <person name="Ninomiya K."/>
            <person name="Ishibashi T."/>
            <person name="Yamashita H."/>
            <person name="Murakawa K."/>
            <person name="Fujimori K."/>
            <person name="Tanai H."/>
            <person name="Kimata M."/>
            <person name="Watanabe M."/>
            <person name="Hiraoka S."/>
            <person name="Chiba Y."/>
            <person name="Ishida S."/>
            <person name="Ono Y."/>
            <person name="Takiguchi S."/>
            <person name="Watanabe S."/>
            <person name="Yosida M."/>
            <person name="Hotuta T."/>
            <person name="Kusano J."/>
            <person name="Kanehori K."/>
            <person name="Takahashi-Fujii A."/>
            <person name="Hara H."/>
            <person name="Tanase T.-O."/>
            <person name="Nomura Y."/>
            <person name="Togiya S."/>
            <person name="Komai F."/>
            <person name="Hara R."/>
            <person name="Takeuchi K."/>
            <person name="Arita M."/>
            <person name="Imose N."/>
            <person name="Musashino K."/>
            <person name="Yuuki H."/>
            <person name="Oshima A."/>
            <person name="Sasaki N."/>
            <person name="Aotsuka S."/>
            <person name="Yoshikawa Y."/>
            <person name="Matsunawa H."/>
            <person name="Ichihara T."/>
            <person name="Shiohata N."/>
            <person name="Sano S."/>
            <person name="Moriya S."/>
            <person name="Momiyama H."/>
            <person name="Satoh N."/>
            <person name="Takami S."/>
            <person name="Terashima Y."/>
            <person name="Suzuki O."/>
            <person name="Nakagawa S."/>
            <person name="Senoh A."/>
            <person name="Mizoguchi H."/>
            <person name="Goto Y."/>
            <person name="Shimizu F."/>
            <person name="Wakebe H."/>
            <person name="Hishigaki H."/>
            <person name="Watanabe T."/>
            <person name="Sugiyama A."/>
            <person name="Takemoto M."/>
            <person name="Kawakami B."/>
            <person name="Yamazaki M."/>
            <person name="Watanabe K."/>
            <person name="Kumagai A."/>
            <person name="Itakura S."/>
            <person name="Fukuzumi Y."/>
            <person name="Fujimori Y."/>
            <person name="Komiyama M."/>
            <person name="Tashiro H."/>
            <person name="Tanigami A."/>
            <person name="Fujiwara T."/>
            <person name="Ono T."/>
            <person name="Yamada K."/>
            <person name="Fujii Y."/>
            <person name="Ozaki K."/>
            <person name="Hirao M."/>
            <person name="Ohmori Y."/>
            <person name="Kawabata A."/>
            <person name="Hikiji T."/>
            <person name="Kobatake N."/>
            <person name="Inagaki H."/>
            <person name="Ikema Y."/>
            <person name="Okamoto S."/>
            <person name="Okitani R."/>
            <person name="Kawakami T."/>
            <person name="Noguchi S."/>
            <person name="Itoh T."/>
            <person name="Shigeta K."/>
            <person name="Senba T."/>
            <person name="Matsumura K."/>
            <person name="Nakajima Y."/>
            <person name="Mizuno T."/>
            <person name="Morinaga M."/>
            <person name="Sasaki M."/>
            <person name="Togashi T."/>
            <person name="Oyama M."/>
            <person name="Hata H."/>
            <person name="Watanabe M."/>
            <person name="Komatsu T."/>
            <person name="Mizushima-Sugano J."/>
            <person name="Satoh T."/>
            <person name="Shirai Y."/>
            <person name="Takahashi Y."/>
            <person name="Nakagawa K."/>
            <person name="Okumura K."/>
            <person name="Nagase T."/>
            <person name="Nomura N."/>
            <person name="Kikuchi H."/>
            <person name="Masuho Y."/>
            <person name="Yamashita R."/>
            <person name="Nakai K."/>
            <person name="Yada T."/>
            <person name="Nakamura Y."/>
            <person name="Ohara O."/>
            <person name="Isogai T."/>
            <person name="Sugano S."/>
        </authorList>
    </citation>
    <scope>NUCLEOTIDE SEQUENCE [LARGE SCALE MRNA] (ISOFORMS 1 AND 2)</scope>
    <source>
        <tissue>Amygdala</tissue>
        <tissue>Cerebellum</tissue>
        <tissue>Cervix</tissue>
        <tissue>Thymus</tissue>
    </source>
</reference>
<reference key="5">
    <citation type="submission" date="2004-05" db="EMBL/GenBank/DDBJ databases">
        <title>Identification of a human aging-related gene.</title>
        <authorList>
            <person name="Kim J.W."/>
        </authorList>
    </citation>
    <scope>NUCLEOTIDE SEQUENCE [LARGE SCALE MRNA] (ISOFORM 3)</scope>
    <source>
        <tissue>Umbilical cord</tissue>
    </source>
</reference>
<reference key="6">
    <citation type="journal article" date="2005" name="Nature">
        <title>The DNA sequence of the human X chromosome.</title>
        <authorList>
            <person name="Ross M.T."/>
            <person name="Grafham D.V."/>
            <person name="Coffey A.J."/>
            <person name="Scherer S."/>
            <person name="McLay K."/>
            <person name="Muzny D."/>
            <person name="Platzer M."/>
            <person name="Howell G.R."/>
            <person name="Burrows C."/>
            <person name="Bird C.P."/>
            <person name="Frankish A."/>
            <person name="Lovell F.L."/>
            <person name="Howe K.L."/>
            <person name="Ashurst J.L."/>
            <person name="Fulton R.S."/>
            <person name="Sudbrak R."/>
            <person name="Wen G."/>
            <person name="Jones M.C."/>
            <person name="Hurles M.E."/>
            <person name="Andrews T.D."/>
            <person name="Scott C.E."/>
            <person name="Searle S."/>
            <person name="Ramser J."/>
            <person name="Whittaker A."/>
            <person name="Deadman R."/>
            <person name="Carter N.P."/>
            <person name="Hunt S.E."/>
            <person name="Chen R."/>
            <person name="Cree A."/>
            <person name="Gunaratne P."/>
            <person name="Havlak P."/>
            <person name="Hodgson A."/>
            <person name="Metzker M.L."/>
            <person name="Richards S."/>
            <person name="Scott G."/>
            <person name="Steffen D."/>
            <person name="Sodergren E."/>
            <person name="Wheeler D.A."/>
            <person name="Worley K.C."/>
            <person name="Ainscough R."/>
            <person name="Ambrose K.D."/>
            <person name="Ansari-Lari M.A."/>
            <person name="Aradhya S."/>
            <person name="Ashwell R.I."/>
            <person name="Babbage A.K."/>
            <person name="Bagguley C.L."/>
            <person name="Ballabio A."/>
            <person name="Banerjee R."/>
            <person name="Barker G.E."/>
            <person name="Barlow K.F."/>
            <person name="Barrett I.P."/>
            <person name="Bates K.N."/>
            <person name="Beare D.M."/>
            <person name="Beasley H."/>
            <person name="Beasley O."/>
            <person name="Beck A."/>
            <person name="Bethel G."/>
            <person name="Blechschmidt K."/>
            <person name="Brady N."/>
            <person name="Bray-Allen S."/>
            <person name="Bridgeman A.M."/>
            <person name="Brown A.J."/>
            <person name="Brown M.J."/>
            <person name="Bonnin D."/>
            <person name="Bruford E.A."/>
            <person name="Buhay C."/>
            <person name="Burch P."/>
            <person name="Burford D."/>
            <person name="Burgess J."/>
            <person name="Burrill W."/>
            <person name="Burton J."/>
            <person name="Bye J.M."/>
            <person name="Carder C."/>
            <person name="Carrel L."/>
            <person name="Chako J."/>
            <person name="Chapman J.C."/>
            <person name="Chavez D."/>
            <person name="Chen E."/>
            <person name="Chen G."/>
            <person name="Chen Y."/>
            <person name="Chen Z."/>
            <person name="Chinault C."/>
            <person name="Ciccodicola A."/>
            <person name="Clark S.Y."/>
            <person name="Clarke G."/>
            <person name="Clee C.M."/>
            <person name="Clegg S."/>
            <person name="Clerc-Blankenburg K."/>
            <person name="Clifford K."/>
            <person name="Cobley V."/>
            <person name="Cole C.G."/>
            <person name="Conquer J.S."/>
            <person name="Corby N."/>
            <person name="Connor R.E."/>
            <person name="David R."/>
            <person name="Davies J."/>
            <person name="Davis C."/>
            <person name="Davis J."/>
            <person name="Delgado O."/>
            <person name="Deshazo D."/>
            <person name="Dhami P."/>
            <person name="Ding Y."/>
            <person name="Dinh H."/>
            <person name="Dodsworth S."/>
            <person name="Draper H."/>
            <person name="Dugan-Rocha S."/>
            <person name="Dunham A."/>
            <person name="Dunn M."/>
            <person name="Durbin K.J."/>
            <person name="Dutta I."/>
            <person name="Eades T."/>
            <person name="Ellwood M."/>
            <person name="Emery-Cohen A."/>
            <person name="Errington H."/>
            <person name="Evans K.L."/>
            <person name="Faulkner L."/>
            <person name="Francis F."/>
            <person name="Frankland J."/>
            <person name="Fraser A.E."/>
            <person name="Galgoczy P."/>
            <person name="Gilbert J."/>
            <person name="Gill R."/>
            <person name="Gloeckner G."/>
            <person name="Gregory S.G."/>
            <person name="Gribble S."/>
            <person name="Griffiths C."/>
            <person name="Grocock R."/>
            <person name="Gu Y."/>
            <person name="Gwilliam R."/>
            <person name="Hamilton C."/>
            <person name="Hart E.A."/>
            <person name="Hawes A."/>
            <person name="Heath P.D."/>
            <person name="Heitmann K."/>
            <person name="Hennig S."/>
            <person name="Hernandez J."/>
            <person name="Hinzmann B."/>
            <person name="Ho S."/>
            <person name="Hoffs M."/>
            <person name="Howden P.J."/>
            <person name="Huckle E.J."/>
            <person name="Hume J."/>
            <person name="Hunt P.J."/>
            <person name="Hunt A.R."/>
            <person name="Isherwood J."/>
            <person name="Jacob L."/>
            <person name="Johnson D."/>
            <person name="Jones S."/>
            <person name="de Jong P.J."/>
            <person name="Joseph S.S."/>
            <person name="Keenan S."/>
            <person name="Kelly S."/>
            <person name="Kershaw J.K."/>
            <person name="Khan Z."/>
            <person name="Kioschis P."/>
            <person name="Klages S."/>
            <person name="Knights A.J."/>
            <person name="Kosiura A."/>
            <person name="Kovar-Smith C."/>
            <person name="Laird G.K."/>
            <person name="Langford C."/>
            <person name="Lawlor S."/>
            <person name="Leversha M."/>
            <person name="Lewis L."/>
            <person name="Liu W."/>
            <person name="Lloyd C."/>
            <person name="Lloyd D.M."/>
            <person name="Loulseged H."/>
            <person name="Loveland J.E."/>
            <person name="Lovell J.D."/>
            <person name="Lozado R."/>
            <person name="Lu J."/>
            <person name="Lyne R."/>
            <person name="Ma J."/>
            <person name="Maheshwari M."/>
            <person name="Matthews L.H."/>
            <person name="McDowall J."/>
            <person name="McLaren S."/>
            <person name="McMurray A."/>
            <person name="Meidl P."/>
            <person name="Meitinger T."/>
            <person name="Milne S."/>
            <person name="Miner G."/>
            <person name="Mistry S.L."/>
            <person name="Morgan M."/>
            <person name="Morris S."/>
            <person name="Mueller I."/>
            <person name="Mullikin J.C."/>
            <person name="Nguyen N."/>
            <person name="Nordsiek G."/>
            <person name="Nyakatura G."/>
            <person name="O'dell C.N."/>
            <person name="Okwuonu G."/>
            <person name="Palmer S."/>
            <person name="Pandian R."/>
            <person name="Parker D."/>
            <person name="Parrish J."/>
            <person name="Pasternak S."/>
            <person name="Patel D."/>
            <person name="Pearce A.V."/>
            <person name="Pearson D.M."/>
            <person name="Pelan S.E."/>
            <person name="Perez L."/>
            <person name="Porter K.M."/>
            <person name="Ramsey Y."/>
            <person name="Reichwald K."/>
            <person name="Rhodes S."/>
            <person name="Ridler K.A."/>
            <person name="Schlessinger D."/>
            <person name="Schueler M.G."/>
            <person name="Sehra H.K."/>
            <person name="Shaw-Smith C."/>
            <person name="Shen H."/>
            <person name="Sheridan E.M."/>
            <person name="Shownkeen R."/>
            <person name="Skuce C.D."/>
            <person name="Smith M.L."/>
            <person name="Sotheran E.C."/>
            <person name="Steingruber H.E."/>
            <person name="Steward C.A."/>
            <person name="Storey R."/>
            <person name="Swann R.M."/>
            <person name="Swarbreck D."/>
            <person name="Tabor P.E."/>
            <person name="Taudien S."/>
            <person name="Taylor T."/>
            <person name="Teague B."/>
            <person name="Thomas K."/>
            <person name="Thorpe A."/>
            <person name="Timms K."/>
            <person name="Tracey A."/>
            <person name="Trevanion S."/>
            <person name="Tromans A.C."/>
            <person name="d'Urso M."/>
            <person name="Verduzco D."/>
            <person name="Villasana D."/>
            <person name="Waldron L."/>
            <person name="Wall M."/>
            <person name="Wang Q."/>
            <person name="Warren J."/>
            <person name="Warry G.L."/>
            <person name="Wei X."/>
            <person name="West A."/>
            <person name="Whitehead S.L."/>
            <person name="Whiteley M.N."/>
            <person name="Wilkinson J.E."/>
            <person name="Willey D.L."/>
            <person name="Williams G."/>
            <person name="Williams L."/>
            <person name="Williamson A."/>
            <person name="Williamson H."/>
            <person name="Wilming L."/>
            <person name="Woodmansey R.L."/>
            <person name="Wray P.W."/>
            <person name="Yen J."/>
            <person name="Zhang J."/>
            <person name="Zhou J."/>
            <person name="Zoghbi H."/>
            <person name="Zorilla S."/>
            <person name="Buck D."/>
            <person name="Reinhardt R."/>
            <person name="Poustka A."/>
            <person name="Rosenthal A."/>
            <person name="Lehrach H."/>
            <person name="Meindl A."/>
            <person name="Minx P.J."/>
            <person name="Hillier L.W."/>
            <person name="Willard H.F."/>
            <person name="Wilson R.K."/>
            <person name="Waterston R.H."/>
            <person name="Rice C.M."/>
            <person name="Vaudin M."/>
            <person name="Coulson A."/>
            <person name="Nelson D.L."/>
            <person name="Weinstock G."/>
            <person name="Sulston J.E."/>
            <person name="Durbin R.M."/>
            <person name="Hubbard T."/>
            <person name="Gibbs R.A."/>
            <person name="Beck S."/>
            <person name="Rogers J."/>
            <person name="Bentley D.R."/>
        </authorList>
    </citation>
    <scope>NUCLEOTIDE SEQUENCE [LARGE SCALE GENOMIC DNA]</scope>
</reference>
<reference key="7">
    <citation type="submission" date="2005-09" db="EMBL/GenBank/DDBJ databases">
        <authorList>
            <person name="Mural R.J."/>
            <person name="Istrail S."/>
            <person name="Sutton G."/>
            <person name="Florea L."/>
            <person name="Halpern A.L."/>
            <person name="Mobarry C.M."/>
            <person name="Lippert R."/>
            <person name="Walenz B."/>
            <person name="Shatkay H."/>
            <person name="Dew I."/>
            <person name="Miller J.R."/>
            <person name="Flanigan M.J."/>
            <person name="Edwards N.J."/>
            <person name="Bolanos R."/>
            <person name="Fasulo D."/>
            <person name="Halldorsson B.V."/>
            <person name="Hannenhalli S."/>
            <person name="Turner R."/>
            <person name="Yooseph S."/>
            <person name="Lu F."/>
            <person name="Nusskern D.R."/>
            <person name="Shue B.C."/>
            <person name="Zheng X.H."/>
            <person name="Zhong F."/>
            <person name="Delcher A.L."/>
            <person name="Huson D.H."/>
            <person name="Kravitz S.A."/>
            <person name="Mouchard L."/>
            <person name="Reinert K."/>
            <person name="Remington K.A."/>
            <person name="Clark A.G."/>
            <person name="Waterman M.S."/>
            <person name="Eichler E.E."/>
            <person name="Adams M.D."/>
            <person name="Hunkapiller M.W."/>
            <person name="Myers E.W."/>
            <person name="Venter J.C."/>
        </authorList>
    </citation>
    <scope>NUCLEOTIDE SEQUENCE [LARGE SCALE GENOMIC DNA]</scope>
</reference>
<reference key="8">
    <citation type="journal article" date="2004" name="Genome Res.">
        <title>The status, quality, and expansion of the NIH full-length cDNA project: the Mammalian Gene Collection (MGC).</title>
        <authorList>
            <consortium name="The MGC Project Team"/>
        </authorList>
    </citation>
    <scope>NUCLEOTIDE SEQUENCE [LARGE SCALE MRNA] (ISOFORM 1)</scope>
    <source>
        <tissue>Lung</tissue>
    </source>
</reference>
<reference key="9">
    <citation type="journal article" date="2007" name="Hum. Mol. Genet.">
        <title>MPP1 links the Usher protein network and the Crumbs protein complex in the retina.</title>
        <authorList>
            <person name="Gosens I."/>
            <person name="van Wijk E."/>
            <person name="Kersten F.F."/>
            <person name="Krieger E."/>
            <person name="van der Zwaag B."/>
            <person name="Maerker T."/>
            <person name="Letteboer S.J."/>
            <person name="Dusseljee S."/>
            <person name="Peters T."/>
            <person name="Spierenburg H.A."/>
            <person name="Punte I.M."/>
            <person name="Wolfrum U."/>
            <person name="Cremers F.P.M."/>
            <person name="Kremer H."/>
            <person name="Roepman R."/>
        </authorList>
    </citation>
    <scope>SUBUNIT</scope>
    <scope>INTERACTION WITH PALS1 AND WHRN</scope>
    <scope>TISSUE SPECIFICITY</scope>
</reference>
<reference key="10">
    <citation type="journal article" date="2008" name="Proc. Natl. Acad. Sci. U.S.A.">
        <title>A quantitative atlas of mitotic phosphorylation.</title>
        <authorList>
            <person name="Dephoure N."/>
            <person name="Zhou C."/>
            <person name="Villen J."/>
            <person name="Beausoleil S.A."/>
            <person name="Bakalarski C.E."/>
            <person name="Elledge S.J."/>
            <person name="Gygi S.P."/>
        </authorList>
    </citation>
    <scope>PHOSPHORYLATION [LARGE SCALE ANALYSIS] AT THR-49; SER-57 AND SER-243</scope>
    <scope>IDENTIFICATION BY MASS SPECTROMETRY [LARGE SCALE ANALYSIS]</scope>
    <source>
        <tissue>Cervix carcinoma</tissue>
    </source>
</reference>
<reference key="11">
    <citation type="journal article" date="2009" name="Exp. Biol. Med.">
        <title>Identification of erythrocyte p55/MPP1 as a binding partner of NF2 tumor suppressor protein/Merlin.</title>
        <authorList>
            <person name="Seo P.-S."/>
            <person name="Quinn B.J."/>
            <person name="Khan A.A."/>
            <person name="Zeng L."/>
            <person name="Takoudis C.G."/>
            <person name="Hanada T."/>
            <person name="Bolis A."/>
            <person name="Bolino A."/>
            <person name="Chishti A.H."/>
        </authorList>
    </citation>
    <scope>INTERACTION WITH NF2</scope>
    <scope>SUBCELLULAR LOCATION</scope>
</reference>
<reference key="12">
    <citation type="journal article" date="2010" name="Sci. Signal.">
        <title>Quantitative phosphoproteomics reveals widespread full phosphorylation site occupancy during mitosis.</title>
        <authorList>
            <person name="Olsen J.V."/>
            <person name="Vermeulen M."/>
            <person name="Santamaria A."/>
            <person name="Kumar C."/>
            <person name="Miller M.L."/>
            <person name="Jensen L.J."/>
            <person name="Gnad F."/>
            <person name="Cox J."/>
            <person name="Jensen T.S."/>
            <person name="Nigg E.A."/>
            <person name="Brunak S."/>
            <person name="Mann M."/>
        </authorList>
    </citation>
    <scope>PHOSPHORYLATION [LARGE SCALE ANALYSIS] AT SER-110</scope>
    <scope>IDENTIFICATION BY MASS SPECTROMETRY [LARGE SCALE ANALYSIS]</scope>
    <source>
        <tissue>Cervix carcinoma</tissue>
    </source>
</reference>
<reference key="13">
    <citation type="journal article" date="2011" name="BMC Syst. Biol.">
        <title>Initial characterization of the human central proteome.</title>
        <authorList>
            <person name="Burkard T.R."/>
            <person name="Planyavsky M."/>
            <person name="Kaupe I."/>
            <person name="Breitwieser F.P."/>
            <person name="Buerckstuemmer T."/>
            <person name="Bennett K.L."/>
            <person name="Superti-Furga G."/>
            <person name="Colinge J."/>
        </authorList>
    </citation>
    <scope>IDENTIFICATION BY MASS SPECTROMETRY [LARGE SCALE ANALYSIS]</scope>
</reference>
<reference key="14">
    <citation type="journal article" date="2012" name="J. Biol. Chem.">
        <title>Palmitoylation of MPP1 (membrane-palmitoylated protein 1)/p55 is crucial for lateral membrane organization in erythroid cells.</title>
        <authorList>
            <person name="Lach A."/>
            <person name="Grzybek M."/>
            <person name="Heger E."/>
            <person name="Korycka J."/>
            <person name="Wolny M."/>
            <person name="Kubiak J."/>
            <person name="Kolondra A."/>
            <person name="Boguslawska D.M."/>
            <person name="Augoff K."/>
            <person name="Majkowski M."/>
            <person name="Podkalicka J."/>
            <person name="Kaczor J."/>
            <person name="Stefanko A."/>
            <person name="Kuliczkowski K."/>
            <person name="Sikorski A.F."/>
        </authorList>
    </citation>
    <scope>RETRACTED PAPER</scope>
</reference>
<reference key="15">
    <citation type="journal article" date="2018" name="J. Biol. Chem.">
        <title>Palmitoylation of MPP1 (membrane-palmitoylated protein 1)/p55 is crucial for lateral membrane organization in erythroid cells.</title>
        <authorList>
            <person name="Lach A."/>
            <person name="Grzybek M."/>
            <person name="Heger E."/>
            <person name="Korycka J."/>
            <person name="Wolny M."/>
            <person name="Kubiak J."/>
            <person name="Kolondra A."/>
            <person name="Boguslawska D.M."/>
            <person name="Augoff K."/>
            <person name="Majkowski M."/>
            <person name="Podkalicka J."/>
            <person name="Kaczor J."/>
            <person name="Stefanko A."/>
            <person name="Kuliczkowski K."/>
            <person name="Sikorski A.F."/>
        </authorList>
    </citation>
    <scope>RETRACTION NOTICE OF PUBMED:22496366</scope>
</reference>
<reference key="16">
    <citation type="journal article" date="2013" name="J. Proteome Res.">
        <title>Toward a comprehensive characterization of a human cancer cell phosphoproteome.</title>
        <authorList>
            <person name="Zhou H."/>
            <person name="Di Palma S."/>
            <person name="Preisinger C."/>
            <person name="Peng M."/>
            <person name="Polat A.N."/>
            <person name="Heck A.J."/>
            <person name="Mohammed S."/>
        </authorList>
    </citation>
    <scope>PHOSPHORYLATION [LARGE SCALE ANALYSIS] AT SER-13; SER-19; SER-57; SER-110 AND SER-243</scope>
    <scope>IDENTIFICATION BY MASS SPECTROMETRY [LARGE SCALE ANALYSIS]</scope>
    <source>
        <tissue>Erythroleukemia</tissue>
    </source>
</reference>
<reference key="17">
    <citation type="journal article" date="2015" name="Proteomics">
        <title>N-terminome analysis of the human mitochondrial proteome.</title>
        <authorList>
            <person name="Vaca Jacome A.S."/>
            <person name="Rabilloud T."/>
            <person name="Schaeffer-Reiss C."/>
            <person name="Rompais M."/>
            <person name="Ayoub D."/>
            <person name="Lane L."/>
            <person name="Bairoch A."/>
            <person name="Van Dorsselaer A."/>
            <person name="Carapito C."/>
        </authorList>
    </citation>
    <scope>ACETYLATION [LARGE SCALE ANALYSIS] AT THR-2</scope>
    <scope>CLEAVAGE OF INITIATOR METHIONINE [LARGE SCALE ANALYSIS]</scope>
    <scope>IDENTIFICATION BY MASS SPECTROMETRY [LARGE SCALE ANALYSIS]</scope>
</reference>
<reference key="18">
    <citation type="journal article" date="2006" name="Proteins">
        <title>Solution structure of human erythroid p55 PDZ domain.</title>
        <authorList>
            <person name="Kusunoki H."/>
            <person name="Kohno T."/>
        </authorList>
    </citation>
    <scope>STRUCTURE BY NMR OF 69-153</scope>
</reference>
<keyword id="KW-0002">3D-structure</keyword>
<keyword id="KW-0007">Acetylation</keyword>
<keyword id="KW-0025">Alternative splicing</keyword>
<keyword id="KW-1003">Cell membrane</keyword>
<keyword id="KW-0966">Cell projection</keyword>
<keyword id="KW-0903">Direct protein sequencing</keyword>
<keyword id="KW-0449">Lipoprotein</keyword>
<keyword id="KW-0472">Membrane</keyword>
<keyword id="KW-0564">Palmitate</keyword>
<keyword id="KW-0597">Phosphoprotein</keyword>
<keyword id="KW-1267">Proteomics identification</keyword>
<keyword id="KW-1185">Reference proteome</keyword>
<keyword id="KW-0728">SH3 domain</keyword>
<evidence type="ECO:0000250" key="1"/>
<evidence type="ECO:0000250" key="2">
    <source>
        <dbReference type="UniProtKB" id="P70290"/>
    </source>
</evidence>
<evidence type="ECO:0000255" key="3">
    <source>
        <dbReference type="PROSITE-ProRule" id="PRU00100"/>
    </source>
</evidence>
<evidence type="ECO:0000255" key="4">
    <source>
        <dbReference type="PROSITE-ProRule" id="PRU00143"/>
    </source>
</evidence>
<evidence type="ECO:0000255" key="5">
    <source>
        <dbReference type="PROSITE-ProRule" id="PRU00192"/>
    </source>
</evidence>
<evidence type="ECO:0000269" key="6">
    <source>
    </source>
</evidence>
<evidence type="ECO:0000269" key="7">
    <source>
    </source>
</evidence>
<evidence type="ECO:0000269" key="8">
    <source>
    </source>
</evidence>
<evidence type="ECO:0000269" key="9">
    <source>
    </source>
</evidence>
<evidence type="ECO:0000269" key="10">
    <source>
    </source>
</evidence>
<evidence type="ECO:0000303" key="11">
    <source>
    </source>
</evidence>
<evidence type="ECO:0000303" key="12">
    <source ref="5"/>
</evidence>
<evidence type="ECO:0000305" key="13"/>
<evidence type="ECO:0000305" key="14">
    <source>
    </source>
</evidence>
<evidence type="ECO:0007744" key="15">
    <source>
    </source>
</evidence>
<evidence type="ECO:0007744" key="16">
    <source>
    </source>
</evidence>
<evidence type="ECO:0007744" key="17">
    <source>
    </source>
</evidence>
<evidence type="ECO:0007744" key="18">
    <source>
    </source>
</evidence>
<evidence type="ECO:0007829" key="19">
    <source>
        <dbReference type="PDB" id="2EJY"/>
    </source>
</evidence>
<evidence type="ECO:0007829" key="20">
    <source>
        <dbReference type="PDB" id="2EV8"/>
    </source>
</evidence>
<evidence type="ECO:0007829" key="21">
    <source>
        <dbReference type="PDB" id="3NEY"/>
    </source>
</evidence>